<gene>
    <name type="primary">pfdn1</name>
    <name type="ORF">zgc:110742</name>
</gene>
<keyword id="KW-0143">Chaperone</keyword>
<keyword id="KW-1185">Reference proteome</keyword>
<proteinExistence type="evidence at transcript level"/>
<dbReference type="EMBL" id="BC090278">
    <property type="protein sequence ID" value="AAH90278.1"/>
    <property type="molecule type" value="mRNA"/>
</dbReference>
<dbReference type="EMBL" id="BC152140">
    <property type="protein sequence ID" value="AAI52141.1"/>
    <property type="molecule type" value="mRNA"/>
</dbReference>
<dbReference type="RefSeq" id="NP_001013362.1">
    <property type="nucleotide sequence ID" value="NM_001013344.1"/>
</dbReference>
<dbReference type="SMR" id="Q5D016"/>
<dbReference type="FunCoup" id="Q5D016">
    <property type="interactions" value="2772"/>
</dbReference>
<dbReference type="STRING" id="7955.ENSDARP00000106280"/>
<dbReference type="PaxDb" id="7955-ENSDARP00000106280"/>
<dbReference type="Ensembl" id="ENSDART00000126621">
    <property type="protein sequence ID" value="ENSDARP00000106280"/>
    <property type="gene ID" value="ENSDARG00000014536"/>
</dbReference>
<dbReference type="GeneID" id="503766"/>
<dbReference type="KEGG" id="dre:503766"/>
<dbReference type="AGR" id="ZFIN:ZDB-GENE-050306-50"/>
<dbReference type="CTD" id="5201"/>
<dbReference type="ZFIN" id="ZDB-GENE-050306-50">
    <property type="gene designation" value="pfdn1"/>
</dbReference>
<dbReference type="eggNOG" id="KOG3501">
    <property type="taxonomic scope" value="Eukaryota"/>
</dbReference>
<dbReference type="HOGENOM" id="CLU_122140_2_0_1"/>
<dbReference type="InParanoid" id="Q5D016"/>
<dbReference type="OMA" id="REMIQQK"/>
<dbReference type="OrthoDB" id="5242628at2759"/>
<dbReference type="PhylomeDB" id="Q5D016"/>
<dbReference type="TreeFam" id="TF106490"/>
<dbReference type="PRO" id="PR:Q5D016"/>
<dbReference type="Proteomes" id="UP000000437">
    <property type="component" value="Chromosome 21"/>
</dbReference>
<dbReference type="Bgee" id="ENSDARG00000014536">
    <property type="expression patterns" value="Expressed in mature ovarian follicle and 21 other cell types or tissues"/>
</dbReference>
<dbReference type="GO" id="GO:0005737">
    <property type="term" value="C:cytoplasm"/>
    <property type="evidence" value="ECO:0000318"/>
    <property type="project" value="GO_Central"/>
</dbReference>
<dbReference type="GO" id="GO:0016272">
    <property type="term" value="C:prefoldin complex"/>
    <property type="evidence" value="ECO:0007669"/>
    <property type="project" value="InterPro"/>
</dbReference>
<dbReference type="GO" id="GO:0044183">
    <property type="term" value="F:protein folding chaperone"/>
    <property type="evidence" value="ECO:0000318"/>
    <property type="project" value="GO_Central"/>
</dbReference>
<dbReference type="GO" id="GO:0051082">
    <property type="term" value="F:unfolded protein binding"/>
    <property type="evidence" value="ECO:0000318"/>
    <property type="project" value="GO_Central"/>
</dbReference>
<dbReference type="GO" id="GO:0006457">
    <property type="term" value="P:protein folding"/>
    <property type="evidence" value="ECO:0000318"/>
    <property type="project" value="GO_Central"/>
</dbReference>
<dbReference type="CDD" id="cd23164">
    <property type="entry name" value="Prefoldin_1"/>
    <property type="match status" value="1"/>
</dbReference>
<dbReference type="Gene3D" id="1.10.287.370">
    <property type="match status" value="1"/>
</dbReference>
<dbReference type="InterPro" id="IPR002777">
    <property type="entry name" value="PFD_beta-like"/>
</dbReference>
<dbReference type="InterPro" id="IPR009053">
    <property type="entry name" value="Prefoldin"/>
</dbReference>
<dbReference type="PANTHER" id="PTHR20903:SF0">
    <property type="entry name" value="PREFOLDIN SUBUNIT 1"/>
    <property type="match status" value="1"/>
</dbReference>
<dbReference type="PANTHER" id="PTHR20903">
    <property type="entry name" value="PREFOLDIN SUBUNIT 1-RELATED"/>
    <property type="match status" value="1"/>
</dbReference>
<dbReference type="Pfam" id="PF01920">
    <property type="entry name" value="Prefoldin_2"/>
    <property type="match status" value="1"/>
</dbReference>
<dbReference type="SUPFAM" id="SSF46579">
    <property type="entry name" value="Prefoldin"/>
    <property type="match status" value="1"/>
</dbReference>
<protein>
    <recommendedName>
        <fullName>Prefoldin subunit 1</fullName>
    </recommendedName>
</protein>
<feature type="chain" id="PRO_0000232447" description="Prefoldin subunit 1">
    <location>
        <begin position="1"/>
        <end position="122"/>
    </location>
</feature>
<accession>Q5D016</accession>
<accession>A7MCD8</accession>
<reference key="1">
    <citation type="submission" date="2007-08" db="EMBL/GenBank/DDBJ databases">
        <authorList>
            <consortium name="NIH - Zebrafish Gene Collection (ZGC) project"/>
        </authorList>
    </citation>
    <scope>NUCLEOTIDE SEQUENCE [LARGE SCALE MRNA]</scope>
    <source>
        <tissue>Embryo</tissue>
        <tissue>Gill</tissue>
    </source>
</reference>
<name>PFD1_DANRE</name>
<organism>
    <name type="scientific">Danio rerio</name>
    <name type="common">Zebrafish</name>
    <name type="synonym">Brachydanio rerio</name>
    <dbReference type="NCBI Taxonomy" id="7955"/>
    <lineage>
        <taxon>Eukaryota</taxon>
        <taxon>Metazoa</taxon>
        <taxon>Chordata</taxon>
        <taxon>Craniata</taxon>
        <taxon>Vertebrata</taxon>
        <taxon>Euteleostomi</taxon>
        <taxon>Actinopterygii</taxon>
        <taxon>Neopterygii</taxon>
        <taxon>Teleostei</taxon>
        <taxon>Ostariophysi</taxon>
        <taxon>Cypriniformes</taxon>
        <taxon>Danionidae</taxon>
        <taxon>Danioninae</taxon>
        <taxon>Danio</taxon>
    </lineage>
</organism>
<evidence type="ECO:0000250" key="1"/>
<evidence type="ECO:0000305" key="2"/>
<comment type="function">
    <text evidence="1">Binds specifically to cytosolic chaperonin (c-CPN) and transfers target proteins to it. Binds to nascent polypeptide chain and promotes folding in an environment in which there are many competing pathways for nonnative proteins (By similarity).</text>
</comment>
<comment type="subunit">
    <text evidence="1">Heterohexamer of two PFD-alpha type and four PFD-beta type subunits.</text>
</comment>
<comment type="similarity">
    <text evidence="2">Belongs to the prefoldin subunit beta family.</text>
</comment>
<sequence length="122" mass="13987">MAAPVDLELKKAFAELQAKMVDTQQKVKLADLQIEQLSRVKKHANLTHGEITSLPESTRMFEGAGRMFILQSKGEISNQLLEKQKTADDKIKELEQKKTYLERSVKDAEDNIREMLMSRRAQ</sequence>